<evidence type="ECO:0000255" key="1">
    <source>
        <dbReference type="HAMAP-Rule" id="MF_00366"/>
    </source>
</evidence>
<gene>
    <name evidence="1" type="primary">rpoZ</name>
    <name type="ordered locus">STH1340</name>
</gene>
<proteinExistence type="inferred from homology"/>
<organism>
    <name type="scientific">Symbiobacterium thermophilum (strain DSM 24528 / JCM 14929 / IAM 14863 / T)</name>
    <dbReference type="NCBI Taxonomy" id="292459"/>
    <lineage>
        <taxon>Bacteria</taxon>
        <taxon>Bacillati</taxon>
        <taxon>Bacillota</taxon>
        <taxon>Clostridia</taxon>
        <taxon>Eubacteriales</taxon>
        <taxon>Symbiobacteriaceae</taxon>
        <taxon>Symbiobacterium</taxon>
    </lineage>
</organism>
<reference key="1">
    <citation type="journal article" date="2004" name="Nucleic Acids Res.">
        <title>Genome sequence of Symbiobacterium thermophilum, an uncultivable bacterium that depends on microbial commensalism.</title>
        <authorList>
            <person name="Ueda K."/>
            <person name="Yamashita A."/>
            <person name="Ishikawa J."/>
            <person name="Shimada M."/>
            <person name="Watsuji T."/>
            <person name="Morimura K."/>
            <person name="Ikeda H."/>
            <person name="Hattori M."/>
            <person name="Beppu T."/>
        </authorList>
    </citation>
    <scope>NUCLEOTIDE SEQUENCE [LARGE SCALE GENOMIC DNA]</scope>
    <source>
        <strain>DSM 24528 / JCM 14929 / IAM 14863 / T</strain>
    </source>
</reference>
<sequence length="69" mass="7703">MIKPSLDQLMHLVDSKYTLVILAARRARDLQDGKHQMVESKSNKPVTIALEELAAGKLFFERGKPTPLG</sequence>
<name>RPOZ_SYMTH</name>
<feature type="chain" id="PRO_0000237515" description="DNA-directed RNA polymerase subunit omega">
    <location>
        <begin position="1"/>
        <end position="69"/>
    </location>
</feature>
<comment type="function">
    <text evidence="1">Promotes RNA polymerase assembly. Latches the N- and C-terminal regions of the beta' subunit thereby facilitating its interaction with the beta and alpha subunits.</text>
</comment>
<comment type="catalytic activity">
    <reaction evidence="1">
        <text>RNA(n) + a ribonucleoside 5'-triphosphate = RNA(n+1) + diphosphate</text>
        <dbReference type="Rhea" id="RHEA:21248"/>
        <dbReference type="Rhea" id="RHEA-COMP:14527"/>
        <dbReference type="Rhea" id="RHEA-COMP:17342"/>
        <dbReference type="ChEBI" id="CHEBI:33019"/>
        <dbReference type="ChEBI" id="CHEBI:61557"/>
        <dbReference type="ChEBI" id="CHEBI:140395"/>
        <dbReference type="EC" id="2.7.7.6"/>
    </reaction>
</comment>
<comment type="subunit">
    <text evidence="1">The RNAP catalytic core consists of 2 alpha, 1 beta, 1 beta' and 1 omega subunit. When a sigma factor is associated with the core the holoenzyme is formed, which can initiate transcription.</text>
</comment>
<comment type="similarity">
    <text evidence="1">Belongs to the RNA polymerase subunit omega family.</text>
</comment>
<dbReference type="EC" id="2.7.7.6" evidence="1"/>
<dbReference type="EMBL" id="AP006840">
    <property type="protein sequence ID" value="BAD40325.1"/>
    <property type="molecule type" value="Genomic_DNA"/>
</dbReference>
<dbReference type="RefSeq" id="WP_011195471.1">
    <property type="nucleotide sequence ID" value="NC_006177.1"/>
</dbReference>
<dbReference type="SMR" id="Q67PR8"/>
<dbReference type="STRING" id="292459.STH1340"/>
<dbReference type="KEGG" id="sth:STH1340"/>
<dbReference type="eggNOG" id="COG1758">
    <property type="taxonomic scope" value="Bacteria"/>
</dbReference>
<dbReference type="HOGENOM" id="CLU_125406_6_1_9"/>
<dbReference type="OrthoDB" id="9815459at2"/>
<dbReference type="Proteomes" id="UP000000417">
    <property type="component" value="Chromosome"/>
</dbReference>
<dbReference type="GO" id="GO:0000428">
    <property type="term" value="C:DNA-directed RNA polymerase complex"/>
    <property type="evidence" value="ECO:0007669"/>
    <property type="project" value="UniProtKB-KW"/>
</dbReference>
<dbReference type="GO" id="GO:0003677">
    <property type="term" value="F:DNA binding"/>
    <property type="evidence" value="ECO:0007669"/>
    <property type="project" value="UniProtKB-UniRule"/>
</dbReference>
<dbReference type="GO" id="GO:0003899">
    <property type="term" value="F:DNA-directed RNA polymerase activity"/>
    <property type="evidence" value="ECO:0007669"/>
    <property type="project" value="UniProtKB-UniRule"/>
</dbReference>
<dbReference type="GO" id="GO:0006351">
    <property type="term" value="P:DNA-templated transcription"/>
    <property type="evidence" value="ECO:0007669"/>
    <property type="project" value="UniProtKB-UniRule"/>
</dbReference>
<dbReference type="Gene3D" id="3.90.940.10">
    <property type="match status" value="1"/>
</dbReference>
<dbReference type="HAMAP" id="MF_00366">
    <property type="entry name" value="RNApol_bact_RpoZ"/>
    <property type="match status" value="1"/>
</dbReference>
<dbReference type="InterPro" id="IPR003716">
    <property type="entry name" value="DNA-dir_RNA_pol_omega"/>
</dbReference>
<dbReference type="InterPro" id="IPR006110">
    <property type="entry name" value="Pol_omega/Rpo6/RPB6"/>
</dbReference>
<dbReference type="InterPro" id="IPR036161">
    <property type="entry name" value="RPB6/omega-like_sf"/>
</dbReference>
<dbReference type="NCBIfam" id="TIGR00690">
    <property type="entry name" value="rpoZ"/>
    <property type="match status" value="1"/>
</dbReference>
<dbReference type="PANTHER" id="PTHR34476">
    <property type="entry name" value="DNA-DIRECTED RNA POLYMERASE SUBUNIT OMEGA"/>
    <property type="match status" value="1"/>
</dbReference>
<dbReference type="PANTHER" id="PTHR34476:SF1">
    <property type="entry name" value="DNA-DIRECTED RNA POLYMERASE SUBUNIT OMEGA"/>
    <property type="match status" value="1"/>
</dbReference>
<dbReference type="Pfam" id="PF01192">
    <property type="entry name" value="RNA_pol_Rpb6"/>
    <property type="match status" value="1"/>
</dbReference>
<dbReference type="SMART" id="SM01409">
    <property type="entry name" value="RNA_pol_Rpb6"/>
    <property type="match status" value="1"/>
</dbReference>
<dbReference type="SUPFAM" id="SSF63562">
    <property type="entry name" value="RPB6/omega subunit-like"/>
    <property type="match status" value="1"/>
</dbReference>
<accession>Q67PR8</accession>
<keyword id="KW-0240">DNA-directed RNA polymerase</keyword>
<keyword id="KW-0548">Nucleotidyltransferase</keyword>
<keyword id="KW-1185">Reference proteome</keyword>
<keyword id="KW-0804">Transcription</keyword>
<keyword id="KW-0808">Transferase</keyword>
<protein>
    <recommendedName>
        <fullName evidence="1">DNA-directed RNA polymerase subunit omega</fullName>
        <shortName evidence="1">RNAP omega subunit</shortName>
        <ecNumber evidence="1">2.7.7.6</ecNumber>
    </recommendedName>
    <alternativeName>
        <fullName evidence="1">RNA polymerase omega subunit</fullName>
    </alternativeName>
    <alternativeName>
        <fullName evidence="1">Transcriptase subunit omega</fullName>
    </alternativeName>
</protein>